<proteinExistence type="evidence at protein level"/>
<protein>
    <recommendedName>
        <fullName evidence="6">Brevinin-1AVb</fullName>
    </recommendedName>
</protein>
<comment type="function">
    <text evidence="1">Antimicrobial peptide.</text>
</comment>
<comment type="subcellular location">
    <subcellularLocation>
        <location evidence="3 4 5">Secreted</location>
    </subcellularLocation>
</comment>
<comment type="tissue specificity">
    <text evidence="3 4 5">Expressed by the skin glands.</text>
</comment>
<comment type="mass spectrometry"/>
<comment type="mass spectrometry"/>
<comment type="similarity">
    <text evidence="2">Belongs to the frog skin active peptide (FSAP) family. Brevinin subfamily.</text>
</comment>
<name>BR1B_RANAR</name>
<evidence type="ECO:0000250" key="1">
    <source>
        <dbReference type="UniProtKB" id="P82825"/>
    </source>
</evidence>
<evidence type="ECO:0000255" key="2"/>
<evidence type="ECO:0000269" key="3">
    <source>
    </source>
</evidence>
<evidence type="ECO:0000269" key="4">
    <source>
    </source>
</evidence>
<evidence type="ECO:0000269" key="5">
    <source>
    </source>
</evidence>
<evidence type="ECO:0000303" key="6">
    <source>
    </source>
</evidence>
<evidence type="ECO:0000303" key="7">
    <source>
    </source>
</evidence>
<evidence type="ECO:0000303" key="8">
    <source>
    </source>
</evidence>
<evidence type="ECO:0000305" key="9"/>
<keyword id="KW-0878">Amphibian defense peptide</keyword>
<keyword id="KW-0044">Antibiotic</keyword>
<keyword id="KW-0929">Antimicrobial</keyword>
<keyword id="KW-0903">Direct protein sequencing</keyword>
<keyword id="KW-1015">Disulfide bond</keyword>
<keyword id="KW-0964">Secreted</keyword>
<dbReference type="GO" id="GO:0005576">
    <property type="term" value="C:extracellular region"/>
    <property type="evidence" value="ECO:0000314"/>
    <property type="project" value="UniProtKB"/>
</dbReference>
<dbReference type="GO" id="GO:0042742">
    <property type="term" value="P:defense response to bacterium"/>
    <property type="evidence" value="ECO:0007669"/>
    <property type="project" value="UniProtKB-KW"/>
</dbReference>
<sequence>FVPLLVSKLVCVVTKKC</sequence>
<organism>
    <name type="scientific">Rana arvalis</name>
    <name type="common">Moor frog</name>
    <dbReference type="NCBI Taxonomy" id="156871"/>
    <lineage>
        <taxon>Eukaryota</taxon>
        <taxon>Metazoa</taxon>
        <taxon>Chordata</taxon>
        <taxon>Craniata</taxon>
        <taxon>Vertebrata</taxon>
        <taxon>Euteleostomi</taxon>
        <taxon>Amphibia</taxon>
        <taxon>Batrachia</taxon>
        <taxon>Anura</taxon>
        <taxon>Neobatrachia</taxon>
        <taxon>Ranoidea</taxon>
        <taxon>Ranidae</taxon>
        <taxon>Rana</taxon>
        <taxon>Rana</taxon>
    </lineage>
</organism>
<feature type="peptide" id="PRO_0000371256" description="Brevinin-1AVb" evidence="3">
    <location>
        <begin position="1"/>
        <end position="17"/>
    </location>
</feature>
<feature type="disulfide bond" evidence="3 4">
    <location>
        <begin position="11"/>
        <end position="17"/>
    </location>
</feature>
<reference evidence="9" key="1">
    <citation type="journal article" date="2008" name="J. Am. Soc. Mass Spectrom.">
        <title>Oxidation versus carboxamidomethylation of S-S bond in ranid frog peptides: pro and contra for de novo MALDI-MS sequencing.</title>
        <authorList>
            <person name="Samgina T.Y."/>
            <person name="Artemenko K.A."/>
            <person name="Gorshkov V.A."/>
            <person name="Poljakov N.B."/>
            <person name="Lebedev A.T."/>
        </authorList>
    </citation>
    <scope>PROTEIN SEQUENCE</scope>
    <scope>SUBCELLULAR LOCATION</scope>
    <scope>TISSUE SPECIFICITY</scope>
    <scope>MASS SPECTROMETRY</scope>
    <scope>DISULFIDE BOND</scope>
    <source>
        <tissue evidence="3">Skin secretion</tissue>
    </source>
</reference>
<reference key="2">
    <citation type="journal article" date="2009" name="Rapid Commun. Mass Spectrom.">
        <title>Mass spectrometric study of peptides secreted by the skin glands of the brown frog Rana arvalis from the Moscow region.</title>
        <authorList>
            <person name="Samgina T.Y."/>
            <person name="Artemenko K.A."/>
            <person name="Gorshkov V.A."/>
            <person name="Ogourtsov S.V."/>
            <person name="Zubarev R.A."/>
            <person name="Lebedev A.T."/>
        </authorList>
    </citation>
    <scope>PROTEIN SEQUENCE</scope>
    <scope>SUBCELLULAR LOCATION</scope>
    <scope>TISSUE SPECIFICITY</scope>
    <scope>DISULFIDE BOND</scope>
    <source>
        <tissue evidence="7">Skin secretion</tissue>
    </source>
</reference>
<reference key="3">
    <citation type="journal article" date="2022" name="J. Am. Soc. Mass Spectrom.">
        <title>Mass Spectrometry Differentiation between Rana arvalis Populations Based on Their Skin Peptidome Composition.</title>
        <authorList>
            <person name="Samgina T.Y."/>
            <person name="Vasileva I.D."/>
            <person name="Trebse P."/>
            <person name="Torkar G."/>
            <person name="Surin A.K."/>
            <person name="Meng Z."/>
            <person name="Zubarev R.A."/>
            <person name="Lebedev A.T."/>
        </authorList>
    </citation>
    <scope>PROTEIN SEQUENCE</scope>
    <scope>IDENTIFICATION BY MASS SPECTROMETRY</scope>
    <scope>SUBCELLULAR LOCATION</scope>
    <scope>TISSUE SPECIFICITY</scope>
    <source>
        <tissue evidence="8">Skin secretion</tissue>
    </source>
</reference>
<accession>P86160</accession>